<protein>
    <recommendedName>
        <fullName evidence="1">Polyamine aminopropyltransferase</fullName>
    </recommendedName>
    <alternativeName>
        <fullName evidence="1">Putrescine aminopropyltransferase</fullName>
        <shortName evidence="1">PAPT</shortName>
    </alternativeName>
    <alternativeName>
        <fullName evidence="1">Spermidine synthase</fullName>
        <shortName evidence="1">SPDS</shortName>
        <shortName evidence="1">SPDSY</shortName>
        <ecNumber evidence="1">2.5.1.16</ecNumber>
    </alternativeName>
</protein>
<organism>
    <name type="scientific">Xanthomonas axonopodis pv. citri (strain 306)</name>
    <dbReference type="NCBI Taxonomy" id="190486"/>
    <lineage>
        <taxon>Bacteria</taxon>
        <taxon>Pseudomonadati</taxon>
        <taxon>Pseudomonadota</taxon>
        <taxon>Gammaproteobacteria</taxon>
        <taxon>Lysobacterales</taxon>
        <taxon>Lysobacteraceae</taxon>
        <taxon>Xanthomonas</taxon>
    </lineage>
</organism>
<comment type="function">
    <text evidence="1">Catalyzes the irreversible transfer of a propylamine group from the amino donor S-adenosylmethioninamine (decarboxy-AdoMet) to putrescine (1,4-diaminobutane) to yield spermidine.</text>
</comment>
<comment type="catalytic activity">
    <reaction evidence="1">
        <text>S-adenosyl 3-(methylsulfanyl)propylamine + putrescine = S-methyl-5'-thioadenosine + spermidine + H(+)</text>
        <dbReference type="Rhea" id="RHEA:12721"/>
        <dbReference type="ChEBI" id="CHEBI:15378"/>
        <dbReference type="ChEBI" id="CHEBI:17509"/>
        <dbReference type="ChEBI" id="CHEBI:57443"/>
        <dbReference type="ChEBI" id="CHEBI:57834"/>
        <dbReference type="ChEBI" id="CHEBI:326268"/>
        <dbReference type="EC" id="2.5.1.16"/>
    </reaction>
</comment>
<comment type="pathway">
    <text evidence="1">Amine and polyamine biosynthesis; spermidine biosynthesis; spermidine from putrescine: step 1/1.</text>
</comment>
<comment type="subunit">
    <text evidence="1">Homodimer or homotetramer.</text>
</comment>
<comment type="subcellular location">
    <subcellularLocation>
        <location evidence="1">Cytoplasm</location>
    </subcellularLocation>
</comment>
<comment type="similarity">
    <text evidence="1">Belongs to the spermidine/spermine synthase family.</text>
</comment>
<name>SPEE_XANAC</name>
<proteinExistence type="inferred from homology"/>
<dbReference type="EC" id="2.5.1.16" evidence="1"/>
<dbReference type="EMBL" id="AE008923">
    <property type="protein sequence ID" value="AAM38761.1"/>
    <property type="molecule type" value="Genomic_DNA"/>
</dbReference>
<dbReference type="RefSeq" id="WP_011052607.1">
    <property type="nucleotide sequence ID" value="NC_003919.1"/>
</dbReference>
<dbReference type="SMR" id="Q8PFQ4"/>
<dbReference type="GeneID" id="66912941"/>
<dbReference type="KEGG" id="xac:XAC3924"/>
<dbReference type="eggNOG" id="COG0421">
    <property type="taxonomic scope" value="Bacteria"/>
</dbReference>
<dbReference type="HOGENOM" id="CLU_048199_0_0_6"/>
<dbReference type="UniPathway" id="UPA00248">
    <property type="reaction ID" value="UER00314"/>
</dbReference>
<dbReference type="Proteomes" id="UP000000576">
    <property type="component" value="Chromosome"/>
</dbReference>
<dbReference type="GO" id="GO:0005829">
    <property type="term" value="C:cytosol"/>
    <property type="evidence" value="ECO:0007669"/>
    <property type="project" value="TreeGrafter"/>
</dbReference>
<dbReference type="GO" id="GO:0004766">
    <property type="term" value="F:spermidine synthase activity"/>
    <property type="evidence" value="ECO:0007669"/>
    <property type="project" value="UniProtKB-UniRule"/>
</dbReference>
<dbReference type="GO" id="GO:0008295">
    <property type="term" value="P:spermidine biosynthetic process"/>
    <property type="evidence" value="ECO:0007669"/>
    <property type="project" value="UniProtKB-UniRule"/>
</dbReference>
<dbReference type="CDD" id="cd02440">
    <property type="entry name" value="AdoMet_MTases"/>
    <property type="match status" value="1"/>
</dbReference>
<dbReference type="FunFam" id="3.40.50.150:FF:000290">
    <property type="entry name" value="Polyamine aminopropyltransferase"/>
    <property type="match status" value="1"/>
</dbReference>
<dbReference type="Gene3D" id="2.30.140.10">
    <property type="entry name" value="Spermidine synthase, tetramerisation domain"/>
    <property type="match status" value="1"/>
</dbReference>
<dbReference type="Gene3D" id="3.40.50.150">
    <property type="entry name" value="Vaccinia Virus protein VP39"/>
    <property type="match status" value="1"/>
</dbReference>
<dbReference type="HAMAP" id="MF_00198">
    <property type="entry name" value="Spermidine_synth"/>
    <property type="match status" value="1"/>
</dbReference>
<dbReference type="InterPro" id="IPR030374">
    <property type="entry name" value="PABS"/>
</dbReference>
<dbReference type="InterPro" id="IPR030373">
    <property type="entry name" value="PABS_CS"/>
</dbReference>
<dbReference type="InterPro" id="IPR029063">
    <property type="entry name" value="SAM-dependent_MTases_sf"/>
</dbReference>
<dbReference type="InterPro" id="IPR001045">
    <property type="entry name" value="Spermi_synthase"/>
</dbReference>
<dbReference type="InterPro" id="IPR035246">
    <property type="entry name" value="Spermidine_synt_N"/>
</dbReference>
<dbReference type="InterPro" id="IPR037163">
    <property type="entry name" value="Spermidine_synt_N_sf"/>
</dbReference>
<dbReference type="NCBIfam" id="NF002010">
    <property type="entry name" value="PRK00811.1"/>
    <property type="match status" value="1"/>
</dbReference>
<dbReference type="NCBIfam" id="TIGR00417">
    <property type="entry name" value="speE"/>
    <property type="match status" value="1"/>
</dbReference>
<dbReference type="PANTHER" id="PTHR11558:SF11">
    <property type="entry name" value="SPERMIDINE SYNTHASE"/>
    <property type="match status" value="1"/>
</dbReference>
<dbReference type="PANTHER" id="PTHR11558">
    <property type="entry name" value="SPERMIDINE/SPERMINE SYNTHASE"/>
    <property type="match status" value="1"/>
</dbReference>
<dbReference type="Pfam" id="PF17284">
    <property type="entry name" value="Spermine_synt_N"/>
    <property type="match status" value="1"/>
</dbReference>
<dbReference type="Pfam" id="PF01564">
    <property type="entry name" value="Spermine_synth"/>
    <property type="match status" value="1"/>
</dbReference>
<dbReference type="SUPFAM" id="SSF53335">
    <property type="entry name" value="S-adenosyl-L-methionine-dependent methyltransferases"/>
    <property type="match status" value="1"/>
</dbReference>
<dbReference type="PROSITE" id="PS01330">
    <property type="entry name" value="PABS_1"/>
    <property type="match status" value="1"/>
</dbReference>
<dbReference type="PROSITE" id="PS51006">
    <property type="entry name" value="PABS_2"/>
    <property type="match status" value="1"/>
</dbReference>
<reference key="1">
    <citation type="journal article" date="2002" name="Nature">
        <title>Comparison of the genomes of two Xanthomonas pathogens with differing host specificities.</title>
        <authorList>
            <person name="da Silva A.C.R."/>
            <person name="Ferro J.A."/>
            <person name="Reinach F.C."/>
            <person name="Farah C.S."/>
            <person name="Furlan L.R."/>
            <person name="Quaggio R.B."/>
            <person name="Monteiro-Vitorello C.B."/>
            <person name="Van Sluys M.A."/>
            <person name="Almeida N.F. Jr."/>
            <person name="Alves L.M.C."/>
            <person name="do Amaral A.M."/>
            <person name="Bertolini M.C."/>
            <person name="Camargo L.E.A."/>
            <person name="Camarotte G."/>
            <person name="Cannavan F."/>
            <person name="Cardozo J."/>
            <person name="Chambergo F."/>
            <person name="Ciapina L.P."/>
            <person name="Cicarelli R.M.B."/>
            <person name="Coutinho L.L."/>
            <person name="Cursino-Santos J.R."/>
            <person name="El-Dorry H."/>
            <person name="Faria J.B."/>
            <person name="Ferreira A.J.S."/>
            <person name="Ferreira R.C.C."/>
            <person name="Ferro M.I.T."/>
            <person name="Formighieri E.F."/>
            <person name="Franco M.C."/>
            <person name="Greggio C.C."/>
            <person name="Gruber A."/>
            <person name="Katsuyama A.M."/>
            <person name="Kishi L.T."/>
            <person name="Leite R.P."/>
            <person name="Lemos E.G.M."/>
            <person name="Lemos M.V.F."/>
            <person name="Locali E.C."/>
            <person name="Machado M.A."/>
            <person name="Madeira A.M.B.N."/>
            <person name="Martinez-Rossi N.M."/>
            <person name="Martins E.C."/>
            <person name="Meidanis J."/>
            <person name="Menck C.F.M."/>
            <person name="Miyaki C.Y."/>
            <person name="Moon D.H."/>
            <person name="Moreira L.M."/>
            <person name="Novo M.T.M."/>
            <person name="Okura V.K."/>
            <person name="Oliveira M.C."/>
            <person name="Oliveira V.R."/>
            <person name="Pereira H.A."/>
            <person name="Rossi A."/>
            <person name="Sena J.A.D."/>
            <person name="Silva C."/>
            <person name="de Souza R.F."/>
            <person name="Spinola L.A.F."/>
            <person name="Takita M.A."/>
            <person name="Tamura R.E."/>
            <person name="Teixeira E.C."/>
            <person name="Tezza R.I.D."/>
            <person name="Trindade dos Santos M."/>
            <person name="Truffi D."/>
            <person name="Tsai S.M."/>
            <person name="White F.F."/>
            <person name="Setubal J.C."/>
            <person name="Kitajima J.P."/>
        </authorList>
    </citation>
    <scope>NUCLEOTIDE SEQUENCE [LARGE SCALE GENOMIC DNA]</scope>
    <source>
        <strain>306</strain>
    </source>
</reference>
<sequence>MSANDNWYIEHFQPTGSAIGFRISGKLDEVQSPFQKIEIYQTTDWGKLMLIDGAVMLTSRDNFFYHEMISHPALFTHPAPKRVVIIGGGDCGTLREVLKHPGVESATQCDIDEQVTRMSEKYFPELCDSNHDARAELLFDDGVAYMANCQAGSVDIVIVDSTDPVGPAEGLFNKAFYESCFKALKDDGILVQQSESPLALLDLINEMRTEMGKAGFQSFKTLPFPQPCYPTGWWSVTMASKQAKADFAFRQDAAQAKGFDTLYYTAHLHTGVLVAPPFVAKALGE</sequence>
<gene>
    <name evidence="1" type="primary">speE</name>
    <name type="ordered locus">XAC3924</name>
</gene>
<feature type="chain" id="PRO_0000156519" description="Polyamine aminopropyltransferase">
    <location>
        <begin position="1"/>
        <end position="285"/>
    </location>
</feature>
<feature type="domain" description="PABS" evidence="1">
    <location>
        <begin position="5"/>
        <end position="241"/>
    </location>
</feature>
<feature type="active site" description="Proton acceptor" evidence="1">
    <location>
        <position position="160"/>
    </location>
</feature>
<feature type="binding site" evidence="1">
    <location>
        <position position="35"/>
    </location>
    <ligand>
        <name>S-methyl-5'-thioadenosine</name>
        <dbReference type="ChEBI" id="CHEBI:17509"/>
    </ligand>
</feature>
<feature type="binding site" evidence="1">
    <location>
        <position position="66"/>
    </location>
    <ligand>
        <name>spermidine</name>
        <dbReference type="ChEBI" id="CHEBI:57834"/>
    </ligand>
</feature>
<feature type="binding site" evidence="1">
    <location>
        <position position="90"/>
    </location>
    <ligand>
        <name>spermidine</name>
        <dbReference type="ChEBI" id="CHEBI:57834"/>
    </ligand>
</feature>
<feature type="binding site" evidence="1">
    <location>
        <position position="110"/>
    </location>
    <ligand>
        <name>S-methyl-5'-thioadenosine</name>
        <dbReference type="ChEBI" id="CHEBI:17509"/>
    </ligand>
</feature>
<feature type="binding site" evidence="1">
    <location>
        <begin position="141"/>
        <end position="142"/>
    </location>
    <ligand>
        <name>S-methyl-5'-thioadenosine</name>
        <dbReference type="ChEBI" id="CHEBI:17509"/>
    </ligand>
</feature>
<feature type="binding site" evidence="1">
    <location>
        <begin position="160"/>
        <end position="163"/>
    </location>
    <ligand>
        <name>spermidine</name>
        <dbReference type="ChEBI" id="CHEBI:57834"/>
    </ligand>
</feature>
<feature type="binding site" evidence="1">
    <location>
        <position position="167"/>
    </location>
    <ligand>
        <name>S-methyl-5'-thioadenosine</name>
        <dbReference type="ChEBI" id="CHEBI:17509"/>
    </ligand>
</feature>
<keyword id="KW-0963">Cytoplasm</keyword>
<keyword id="KW-0620">Polyamine biosynthesis</keyword>
<keyword id="KW-0745">Spermidine biosynthesis</keyword>
<keyword id="KW-0808">Transferase</keyword>
<accession>Q8PFQ4</accession>
<evidence type="ECO:0000255" key="1">
    <source>
        <dbReference type="HAMAP-Rule" id="MF_00198"/>
    </source>
</evidence>